<name>MNHD2_STAAT</name>
<accession>A8Z147</accession>
<dbReference type="EMBL" id="CP000730">
    <property type="protein sequence ID" value="ABX28668.1"/>
    <property type="molecule type" value="Genomic_DNA"/>
</dbReference>
<dbReference type="RefSeq" id="WP_000950548.1">
    <property type="nucleotide sequence ID" value="NC_010079.1"/>
</dbReference>
<dbReference type="SMR" id="A8Z147"/>
<dbReference type="KEGG" id="sax:USA300HOU_0646"/>
<dbReference type="HOGENOM" id="CLU_007100_9_2_9"/>
<dbReference type="GO" id="GO:0005886">
    <property type="term" value="C:plasma membrane"/>
    <property type="evidence" value="ECO:0007669"/>
    <property type="project" value="UniProtKB-SubCell"/>
</dbReference>
<dbReference type="GO" id="GO:0015297">
    <property type="term" value="F:antiporter activity"/>
    <property type="evidence" value="ECO:0007669"/>
    <property type="project" value="UniProtKB-KW"/>
</dbReference>
<dbReference type="GO" id="GO:0008137">
    <property type="term" value="F:NADH dehydrogenase (ubiquinone) activity"/>
    <property type="evidence" value="ECO:0007669"/>
    <property type="project" value="InterPro"/>
</dbReference>
<dbReference type="GO" id="GO:0042773">
    <property type="term" value="P:ATP synthesis coupled electron transport"/>
    <property type="evidence" value="ECO:0007669"/>
    <property type="project" value="InterPro"/>
</dbReference>
<dbReference type="InterPro" id="IPR050586">
    <property type="entry name" value="CPA3_Na-H_Antiporter_D"/>
</dbReference>
<dbReference type="InterPro" id="IPR003918">
    <property type="entry name" value="NADH_UbQ_OxRdtase"/>
</dbReference>
<dbReference type="InterPro" id="IPR001750">
    <property type="entry name" value="ND/Mrp_TM"/>
</dbReference>
<dbReference type="NCBIfam" id="NF009306">
    <property type="entry name" value="PRK12663.1"/>
    <property type="match status" value="1"/>
</dbReference>
<dbReference type="PANTHER" id="PTHR42703:SF1">
    <property type="entry name" value="NA(+)_H(+) ANTIPORTER SUBUNIT D1"/>
    <property type="match status" value="1"/>
</dbReference>
<dbReference type="PANTHER" id="PTHR42703">
    <property type="entry name" value="NADH DEHYDROGENASE"/>
    <property type="match status" value="1"/>
</dbReference>
<dbReference type="Pfam" id="PF00361">
    <property type="entry name" value="Proton_antipo_M"/>
    <property type="match status" value="1"/>
</dbReference>
<dbReference type="PRINTS" id="PR01437">
    <property type="entry name" value="NUOXDRDTASE4"/>
</dbReference>
<sequence length="498" mass="55153">MLSNLLILPMLLPFLCALILVFLKNNDRISKYLYLGTMTITTIISLMLLIYVQRHRPITLDFGGWSAPFGIQFLGDSLSLIMVTTASFVITLIMAYGFGRGEHKANRYHLPSFILFLSVGVIGSFLTSDLFNLYVMFEIMLLASFVLITLGQSVEQLRAAIIYVVLNIIGSWLFLLGIGLLYKTVGTLNFSHIAMRLNDMGDNRTVTMISLIFLVAFSAKAALVLFMWLPKAYAVLNTELAALFAALMTKVGAYALIRFFTLLFDQHNDLIHPLLATMAAITMVIGAIGVIAYKDIKKIAAYQVIISIGFIILGLGTNTFAGINGAIFYLVNDIVVKTLLFFIIGSLVYITGYRQYQYLNGLAKKEPLFGVAFIIMIFAIGGVPPFSGFPGKVLIFQGALQNGNYIGLALMIITSLIAMYSLFRILFYMYFGDKDGEEVNFKKIPLYRKRILSILVVVVIAIGIAAPVVLNVTSDATELNTSDQLYQKLVNPHLKGED</sequence>
<proteinExistence type="inferred from homology"/>
<feature type="chain" id="PRO_0000372241" description="Putative antiporter subunit mnhD2">
    <location>
        <begin position="1"/>
        <end position="498"/>
    </location>
</feature>
<feature type="transmembrane region" description="Helical" evidence="2">
    <location>
        <begin position="2"/>
        <end position="22"/>
    </location>
</feature>
<feature type="transmembrane region" description="Helical" evidence="2">
    <location>
        <begin position="32"/>
        <end position="52"/>
    </location>
</feature>
<feature type="transmembrane region" description="Helical" evidence="2">
    <location>
        <begin position="78"/>
        <end position="98"/>
    </location>
</feature>
<feature type="transmembrane region" description="Helical" evidence="2">
    <location>
        <begin position="108"/>
        <end position="128"/>
    </location>
</feature>
<feature type="transmembrane region" description="Helical" evidence="2">
    <location>
        <begin position="130"/>
        <end position="150"/>
    </location>
</feature>
<feature type="transmembrane region" description="Helical" evidence="2">
    <location>
        <begin position="161"/>
        <end position="181"/>
    </location>
</feature>
<feature type="transmembrane region" description="Helical" evidence="2">
    <location>
        <begin position="209"/>
        <end position="229"/>
    </location>
</feature>
<feature type="transmembrane region" description="Helical" evidence="2">
    <location>
        <begin position="240"/>
        <end position="260"/>
    </location>
</feature>
<feature type="transmembrane region" description="Helical" evidence="2">
    <location>
        <begin position="271"/>
        <end position="291"/>
    </location>
</feature>
<feature type="transmembrane region" description="Helical" evidence="2">
    <location>
        <begin position="308"/>
        <end position="328"/>
    </location>
</feature>
<feature type="transmembrane region" description="Helical" evidence="2">
    <location>
        <begin position="330"/>
        <end position="350"/>
    </location>
</feature>
<feature type="transmembrane region" description="Helical" evidence="2">
    <location>
        <begin position="369"/>
        <end position="389"/>
    </location>
</feature>
<feature type="transmembrane region" description="Helical" evidence="2">
    <location>
        <begin position="403"/>
        <end position="423"/>
    </location>
</feature>
<feature type="transmembrane region" description="Helical" evidence="2">
    <location>
        <begin position="451"/>
        <end position="471"/>
    </location>
</feature>
<evidence type="ECO:0000250" key="1"/>
<evidence type="ECO:0000255" key="2"/>
<evidence type="ECO:0000305" key="3"/>
<protein>
    <recommendedName>
        <fullName>Putative antiporter subunit mnhD2</fullName>
    </recommendedName>
    <alternativeName>
        <fullName>Mrp complex subunit D2</fullName>
    </alternativeName>
    <alternativeName>
        <fullName>Putative NADH-ubiquinone oxidoreductase subunit mnhD2</fullName>
    </alternativeName>
</protein>
<reference key="1">
    <citation type="journal article" date="2007" name="BMC Microbiol.">
        <title>Subtle genetic changes enhance virulence of methicillin resistant and sensitive Staphylococcus aureus.</title>
        <authorList>
            <person name="Highlander S.K."/>
            <person name="Hulten K.G."/>
            <person name="Qin X."/>
            <person name="Jiang H."/>
            <person name="Yerrapragada S."/>
            <person name="Mason E.O. Jr."/>
            <person name="Shang Y."/>
            <person name="Williams T.M."/>
            <person name="Fortunov R.M."/>
            <person name="Liu Y."/>
            <person name="Igboeli O."/>
            <person name="Petrosino J."/>
            <person name="Tirumalai M."/>
            <person name="Uzman A."/>
            <person name="Fox G.E."/>
            <person name="Cardenas A.M."/>
            <person name="Muzny D.M."/>
            <person name="Hemphill L."/>
            <person name="Ding Y."/>
            <person name="Dugan S."/>
            <person name="Blyth P.R."/>
            <person name="Buhay C.J."/>
            <person name="Dinh H.H."/>
            <person name="Hawes A.C."/>
            <person name="Holder M."/>
            <person name="Kovar C.L."/>
            <person name="Lee S.L."/>
            <person name="Liu W."/>
            <person name="Nazareth L.V."/>
            <person name="Wang Q."/>
            <person name="Zhou J."/>
            <person name="Kaplan S.L."/>
            <person name="Weinstock G.M."/>
        </authorList>
    </citation>
    <scope>NUCLEOTIDE SEQUENCE [LARGE SCALE GENOMIC DNA]</scope>
    <source>
        <strain>USA300 / TCH1516</strain>
    </source>
</reference>
<organism>
    <name type="scientific">Staphylococcus aureus (strain USA300 / TCH1516)</name>
    <dbReference type="NCBI Taxonomy" id="451516"/>
    <lineage>
        <taxon>Bacteria</taxon>
        <taxon>Bacillati</taxon>
        <taxon>Bacillota</taxon>
        <taxon>Bacilli</taxon>
        <taxon>Bacillales</taxon>
        <taxon>Staphylococcaceae</taxon>
        <taxon>Staphylococcus</taxon>
    </lineage>
</organism>
<comment type="subunit">
    <text evidence="1">May form a heterooligomeric complex that consists of seven subunits: mnhA2, mnhB2, mnhC2, mnhD2, mnhE2, mnhF2 and mnhG2.</text>
</comment>
<comment type="subcellular location">
    <subcellularLocation>
        <location evidence="3">Cell membrane</location>
        <topology evidence="3">Multi-pass membrane protein</topology>
    </subcellularLocation>
</comment>
<comment type="similarity">
    <text evidence="3">Belongs to the CPA3 antiporters (TC 2.A.63) subunit D family.</text>
</comment>
<gene>
    <name type="primary">mnhD2</name>
    <name type="synonym">mrpD2</name>
    <name type="ordered locus">USA300HOU_0646</name>
</gene>
<keyword id="KW-0050">Antiport</keyword>
<keyword id="KW-1003">Cell membrane</keyword>
<keyword id="KW-0406">Ion transport</keyword>
<keyword id="KW-0472">Membrane</keyword>
<keyword id="KW-0812">Transmembrane</keyword>
<keyword id="KW-1133">Transmembrane helix</keyword>
<keyword id="KW-0813">Transport</keyword>